<organism>
    <name type="scientific">Staphylococcus aureus (strain N315)</name>
    <dbReference type="NCBI Taxonomy" id="158879"/>
    <lineage>
        <taxon>Bacteria</taxon>
        <taxon>Bacillati</taxon>
        <taxon>Bacillota</taxon>
        <taxon>Bacilli</taxon>
        <taxon>Bacillales</taxon>
        <taxon>Staphylococcaceae</taxon>
        <taxon>Staphylococcus</taxon>
    </lineage>
</organism>
<proteinExistence type="evidence at protein level"/>
<sequence length="121" mass="13719">MARIAGVDIPREKRVVISLTYIYGIGTSTAQKILEEANVSADTRVKDLTDDELGRIREVVDGYKVEGDLRRETNLNIKRLMEISSYRGIRHRRGLPVRGQKTKNNARTRKGPVKTVANKKK</sequence>
<accession>P66388</accession>
<accession>Q99S43</accession>
<reference key="1">
    <citation type="journal article" date="2001" name="Lancet">
        <title>Whole genome sequencing of meticillin-resistant Staphylococcus aureus.</title>
        <authorList>
            <person name="Kuroda M."/>
            <person name="Ohta T."/>
            <person name="Uchiyama I."/>
            <person name="Baba T."/>
            <person name="Yuzawa H."/>
            <person name="Kobayashi I."/>
            <person name="Cui L."/>
            <person name="Oguchi A."/>
            <person name="Aoki K."/>
            <person name="Nagai Y."/>
            <person name="Lian J.-Q."/>
            <person name="Ito T."/>
            <person name="Kanamori M."/>
            <person name="Matsumaru H."/>
            <person name="Maruyama A."/>
            <person name="Murakami H."/>
            <person name="Hosoyama A."/>
            <person name="Mizutani-Ui Y."/>
            <person name="Takahashi N.K."/>
            <person name="Sawano T."/>
            <person name="Inoue R."/>
            <person name="Kaito C."/>
            <person name="Sekimizu K."/>
            <person name="Hirakawa H."/>
            <person name="Kuhara S."/>
            <person name="Goto S."/>
            <person name="Yabuzaki J."/>
            <person name="Kanehisa M."/>
            <person name="Yamashita A."/>
            <person name="Oshima K."/>
            <person name="Furuya K."/>
            <person name="Yoshino C."/>
            <person name="Shiba T."/>
            <person name="Hattori M."/>
            <person name="Ogasawara N."/>
            <person name="Hayashi H."/>
            <person name="Hiramatsu K."/>
        </authorList>
    </citation>
    <scope>NUCLEOTIDE SEQUENCE [LARGE SCALE GENOMIC DNA]</scope>
    <source>
        <strain>N315</strain>
    </source>
</reference>
<reference key="2">
    <citation type="submission" date="2007-10" db="UniProtKB">
        <title>Shotgun proteomic analysis of total and membrane protein extracts of S. aureus strain N315.</title>
        <authorList>
            <person name="Vaezzadeh A.R."/>
            <person name="Deshusses J."/>
            <person name="Lescuyer P."/>
            <person name="Hochstrasser D.F."/>
        </authorList>
    </citation>
    <scope>IDENTIFICATION BY MASS SPECTROMETRY [LARGE SCALE ANALYSIS]</scope>
    <source>
        <strain>N315</strain>
    </source>
</reference>
<name>RS13_STAAN</name>
<gene>
    <name evidence="1" type="primary">rpsM</name>
    <name type="ordered locus">SA2025</name>
</gene>
<dbReference type="EMBL" id="BA000018">
    <property type="protein sequence ID" value="BAB43318.1"/>
    <property type="molecule type" value="Genomic_DNA"/>
</dbReference>
<dbReference type="PIR" id="E90019">
    <property type="entry name" value="E90019"/>
</dbReference>
<dbReference type="RefSeq" id="WP_000090796.1">
    <property type="nucleotide sequence ID" value="NC_002745.2"/>
</dbReference>
<dbReference type="SMR" id="P66388"/>
<dbReference type="EnsemblBacteria" id="BAB43318">
    <property type="protein sequence ID" value="BAB43318"/>
    <property type="gene ID" value="BAB43318"/>
</dbReference>
<dbReference type="GeneID" id="66840438"/>
<dbReference type="KEGG" id="sau:SA2025"/>
<dbReference type="HOGENOM" id="CLU_103849_1_1_9"/>
<dbReference type="GO" id="GO:0005829">
    <property type="term" value="C:cytosol"/>
    <property type="evidence" value="ECO:0007669"/>
    <property type="project" value="TreeGrafter"/>
</dbReference>
<dbReference type="GO" id="GO:0015935">
    <property type="term" value="C:small ribosomal subunit"/>
    <property type="evidence" value="ECO:0007669"/>
    <property type="project" value="TreeGrafter"/>
</dbReference>
<dbReference type="GO" id="GO:0019843">
    <property type="term" value="F:rRNA binding"/>
    <property type="evidence" value="ECO:0007669"/>
    <property type="project" value="UniProtKB-UniRule"/>
</dbReference>
<dbReference type="GO" id="GO:0003735">
    <property type="term" value="F:structural constituent of ribosome"/>
    <property type="evidence" value="ECO:0007669"/>
    <property type="project" value="InterPro"/>
</dbReference>
<dbReference type="GO" id="GO:0000049">
    <property type="term" value="F:tRNA binding"/>
    <property type="evidence" value="ECO:0007669"/>
    <property type="project" value="UniProtKB-UniRule"/>
</dbReference>
<dbReference type="GO" id="GO:0006412">
    <property type="term" value="P:translation"/>
    <property type="evidence" value="ECO:0007669"/>
    <property type="project" value="UniProtKB-UniRule"/>
</dbReference>
<dbReference type="FunFam" id="1.10.8.50:FF:000001">
    <property type="entry name" value="30S ribosomal protein S13"/>
    <property type="match status" value="1"/>
</dbReference>
<dbReference type="FunFam" id="4.10.910.10:FF:000001">
    <property type="entry name" value="30S ribosomal protein S13"/>
    <property type="match status" value="1"/>
</dbReference>
<dbReference type="Gene3D" id="1.10.8.50">
    <property type="match status" value="1"/>
</dbReference>
<dbReference type="Gene3D" id="4.10.910.10">
    <property type="entry name" value="30s ribosomal protein s13, domain 2"/>
    <property type="match status" value="1"/>
</dbReference>
<dbReference type="HAMAP" id="MF_01315">
    <property type="entry name" value="Ribosomal_uS13"/>
    <property type="match status" value="1"/>
</dbReference>
<dbReference type="InterPro" id="IPR027437">
    <property type="entry name" value="Rbsml_uS13_C"/>
</dbReference>
<dbReference type="InterPro" id="IPR001892">
    <property type="entry name" value="Ribosomal_uS13"/>
</dbReference>
<dbReference type="InterPro" id="IPR010979">
    <property type="entry name" value="Ribosomal_uS13-like_H2TH"/>
</dbReference>
<dbReference type="InterPro" id="IPR019980">
    <property type="entry name" value="Ribosomal_uS13_bac-type"/>
</dbReference>
<dbReference type="InterPro" id="IPR018269">
    <property type="entry name" value="Ribosomal_uS13_CS"/>
</dbReference>
<dbReference type="NCBIfam" id="TIGR03631">
    <property type="entry name" value="uS13_bact"/>
    <property type="match status" value="1"/>
</dbReference>
<dbReference type="PANTHER" id="PTHR10871">
    <property type="entry name" value="30S RIBOSOMAL PROTEIN S13/40S RIBOSOMAL PROTEIN S18"/>
    <property type="match status" value="1"/>
</dbReference>
<dbReference type="PANTHER" id="PTHR10871:SF1">
    <property type="entry name" value="SMALL RIBOSOMAL SUBUNIT PROTEIN US13M"/>
    <property type="match status" value="1"/>
</dbReference>
<dbReference type="Pfam" id="PF00416">
    <property type="entry name" value="Ribosomal_S13"/>
    <property type="match status" value="1"/>
</dbReference>
<dbReference type="PIRSF" id="PIRSF002134">
    <property type="entry name" value="Ribosomal_S13"/>
    <property type="match status" value="1"/>
</dbReference>
<dbReference type="SUPFAM" id="SSF46946">
    <property type="entry name" value="S13-like H2TH domain"/>
    <property type="match status" value="1"/>
</dbReference>
<dbReference type="PROSITE" id="PS00646">
    <property type="entry name" value="RIBOSOMAL_S13_1"/>
    <property type="match status" value="1"/>
</dbReference>
<dbReference type="PROSITE" id="PS50159">
    <property type="entry name" value="RIBOSOMAL_S13_2"/>
    <property type="match status" value="1"/>
</dbReference>
<comment type="function">
    <text evidence="1">Located at the top of the head of the 30S subunit, it contacts several helices of the 16S rRNA. In the 70S ribosome it contacts the 23S rRNA (bridge B1a) and protein L5 of the 50S subunit (bridge B1b), connecting the 2 subunits; these bridges are implicated in subunit movement. Contacts the tRNAs in the A and P-sites.</text>
</comment>
<comment type="subunit">
    <text evidence="1">Part of the 30S ribosomal subunit. Forms a loose heterodimer with protein S19. Forms two bridges to the 50S subunit in the 70S ribosome.</text>
</comment>
<comment type="similarity">
    <text evidence="1">Belongs to the universal ribosomal protein uS13 family.</text>
</comment>
<feature type="chain" id="PRO_0000132136" description="Small ribosomal subunit protein uS13">
    <location>
        <begin position="1"/>
        <end position="121"/>
    </location>
</feature>
<feature type="region of interest" description="Disordered" evidence="2">
    <location>
        <begin position="91"/>
        <end position="121"/>
    </location>
</feature>
<protein>
    <recommendedName>
        <fullName evidence="1">Small ribosomal subunit protein uS13</fullName>
    </recommendedName>
    <alternativeName>
        <fullName evidence="3">30S ribosomal protein S13</fullName>
    </alternativeName>
</protein>
<keyword id="KW-0687">Ribonucleoprotein</keyword>
<keyword id="KW-0689">Ribosomal protein</keyword>
<keyword id="KW-0694">RNA-binding</keyword>
<keyword id="KW-0699">rRNA-binding</keyword>
<keyword id="KW-0820">tRNA-binding</keyword>
<evidence type="ECO:0000255" key="1">
    <source>
        <dbReference type="HAMAP-Rule" id="MF_01315"/>
    </source>
</evidence>
<evidence type="ECO:0000256" key="2">
    <source>
        <dbReference type="SAM" id="MobiDB-lite"/>
    </source>
</evidence>
<evidence type="ECO:0000305" key="3"/>